<feature type="chain" id="PRO_1000012256" description="Lipoyl synthase">
    <location>
        <begin position="1"/>
        <end position="338"/>
    </location>
</feature>
<feature type="domain" description="Radical SAM core" evidence="2">
    <location>
        <begin position="96"/>
        <end position="313"/>
    </location>
</feature>
<feature type="region of interest" description="Disordered" evidence="3">
    <location>
        <begin position="1"/>
        <end position="22"/>
    </location>
</feature>
<feature type="binding site" evidence="1">
    <location>
        <position position="84"/>
    </location>
    <ligand>
        <name>[4Fe-4S] cluster</name>
        <dbReference type="ChEBI" id="CHEBI:49883"/>
        <label>1</label>
    </ligand>
</feature>
<feature type="binding site" evidence="1">
    <location>
        <position position="89"/>
    </location>
    <ligand>
        <name>[4Fe-4S] cluster</name>
        <dbReference type="ChEBI" id="CHEBI:49883"/>
        <label>1</label>
    </ligand>
</feature>
<feature type="binding site" evidence="1">
    <location>
        <position position="95"/>
    </location>
    <ligand>
        <name>[4Fe-4S] cluster</name>
        <dbReference type="ChEBI" id="CHEBI:49883"/>
        <label>1</label>
    </ligand>
</feature>
<feature type="binding site" evidence="1">
    <location>
        <position position="110"/>
    </location>
    <ligand>
        <name>[4Fe-4S] cluster</name>
        <dbReference type="ChEBI" id="CHEBI:49883"/>
        <label>2</label>
        <note>4Fe-4S-S-AdoMet</note>
    </ligand>
</feature>
<feature type="binding site" evidence="1">
    <location>
        <position position="114"/>
    </location>
    <ligand>
        <name>[4Fe-4S] cluster</name>
        <dbReference type="ChEBI" id="CHEBI:49883"/>
        <label>2</label>
        <note>4Fe-4S-S-AdoMet</note>
    </ligand>
</feature>
<feature type="binding site" evidence="1">
    <location>
        <position position="117"/>
    </location>
    <ligand>
        <name>[4Fe-4S] cluster</name>
        <dbReference type="ChEBI" id="CHEBI:49883"/>
        <label>2</label>
        <note>4Fe-4S-S-AdoMet</note>
    </ligand>
</feature>
<feature type="binding site" evidence="1">
    <location>
        <position position="324"/>
    </location>
    <ligand>
        <name>[4Fe-4S] cluster</name>
        <dbReference type="ChEBI" id="CHEBI:49883"/>
        <label>1</label>
    </ligand>
</feature>
<protein>
    <recommendedName>
        <fullName evidence="1">Lipoyl synthase</fullName>
        <ecNumber evidence="1">2.8.1.8</ecNumber>
    </recommendedName>
    <alternativeName>
        <fullName evidence="1">Lip-syn</fullName>
        <shortName evidence="1">LS</shortName>
    </alternativeName>
    <alternativeName>
        <fullName evidence="1">Lipoate synthase</fullName>
    </alternativeName>
    <alternativeName>
        <fullName evidence="1">Lipoic acid synthase</fullName>
    </alternativeName>
    <alternativeName>
        <fullName evidence="1">Sulfur insertion protein LipA</fullName>
    </alternativeName>
</protein>
<sequence length="338" mass="38044">MTTVQEAVPNLIPTQDVTPRPAPKKVEAGVKLRGAEKVARIPVKIIPTEELPKKPDWIRVRIPVSPEVDRIKQLLRKHKLHSVCEEASCPNLGECFSGGTATFMIMGDICTRRCPFCDVGHGRPKPLDLDEPKNLAIAIADLRLKYVVITSVDRDDLRDGGAQHFADCIREIRALSPGVQLETLVPDYRGRMDVALEITAQTPPDVFNHNLETVPRLYKAARPGSDYDWSLDLLQKFKQMVPHVPTKSGLMLGLGETDEEVIEVMHRMREHDIDMLTLGQYLQPSRNHLPVQRFVHPDTFAWFAEEGYKMGFKNVASGPLVRSSYHADQQAHEAKIKL</sequence>
<organism>
    <name type="scientific">Pseudomonas entomophila (strain L48)</name>
    <dbReference type="NCBI Taxonomy" id="384676"/>
    <lineage>
        <taxon>Bacteria</taxon>
        <taxon>Pseudomonadati</taxon>
        <taxon>Pseudomonadota</taxon>
        <taxon>Gammaproteobacteria</taxon>
        <taxon>Pseudomonadales</taxon>
        <taxon>Pseudomonadaceae</taxon>
        <taxon>Pseudomonas</taxon>
    </lineage>
</organism>
<comment type="function">
    <text evidence="1">Catalyzes the radical-mediated insertion of two sulfur atoms into the C-6 and C-8 positions of the octanoyl moiety bound to the lipoyl domains of lipoate-dependent enzymes, thereby converting the octanoylated domains into lipoylated derivatives.</text>
</comment>
<comment type="catalytic activity">
    <reaction evidence="1">
        <text>[[Fe-S] cluster scaffold protein carrying a second [4Fe-4S](2+) cluster] + N(6)-octanoyl-L-lysyl-[protein] + 2 oxidized [2Fe-2S]-[ferredoxin] + 2 S-adenosyl-L-methionine + 4 H(+) = [[Fe-S] cluster scaffold protein] + N(6)-[(R)-dihydrolipoyl]-L-lysyl-[protein] + 4 Fe(3+) + 2 hydrogen sulfide + 2 5'-deoxyadenosine + 2 L-methionine + 2 reduced [2Fe-2S]-[ferredoxin]</text>
        <dbReference type="Rhea" id="RHEA:16585"/>
        <dbReference type="Rhea" id="RHEA-COMP:9928"/>
        <dbReference type="Rhea" id="RHEA-COMP:10000"/>
        <dbReference type="Rhea" id="RHEA-COMP:10001"/>
        <dbReference type="Rhea" id="RHEA-COMP:10475"/>
        <dbReference type="Rhea" id="RHEA-COMP:14568"/>
        <dbReference type="Rhea" id="RHEA-COMP:14569"/>
        <dbReference type="ChEBI" id="CHEBI:15378"/>
        <dbReference type="ChEBI" id="CHEBI:17319"/>
        <dbReference type="ChEBI" id="CHEBI:29034"/>
        <dbReference type="ChEBI" id="CHEBI:29919"/>
        <dbReference type="ChEBI" id="CHEBI:33722"/>
        <dbReference type="ChEBI" id="CHEBI:33737"/>
        <dbReference type="ChEBI" id="CHEBI:33738"/>
        <dbReference type="ChEBI" id="CHEBI:57844"/>
        <dbReference type="ChEBI" id="CHEBI:59789"/>
        <dbReference type="ChEBI" id="CHEBI:78809"/>
        <dbReference type="ChEBI" id="CHEBI:83100"/>
        <dbReference type="EC" id="2.8.1.8"/>
    </reaction>
</comment>
<comment type="cofactor">
    <cofactor evidence="1">
        <name>[4Fe-4S] cluster</name>
        <dbReference type="ChEBI" id="CHEBI:49883"/>
    </cofactor>
    <text evidence="1">Binds 2 [4Fe-4S] clusters per subunit. One cluster is coordinated with 3 cysteines and an exchangeable S-adenosyl-L-methionine.</text>
</comment>
<comment type="pathway">
    <text evidence="1">Protein modification; protein lipoylation via endogenous pathway; protein N(6)-(lipoyl)lysine from octanoyl-[acyl-carrier-protein]: step 2/2.</text>
</comment>
<comment type="subcellular location">
    <subcellularLocation>
        <location evidence="1">Cytoplasm</location>
    </subcellularLocation>
</comment>
<comment type="similarity">
    <text evidence="1">Belongs to the radical SAM superfamily. Lipoyl synthase family.</text>
</comment>
<dbReference type="EC" id="2.8.1.8" evidence="1"/>
<dbReference type="EMBL" id="CT573326">
    <property type="protein sequence ID" value="CAK17475.1"/>
    <property type="molecule type" value="Genomic_DNA"/>
</dbReference>
<dbReference type="RefSeq" id="WP_011535837.1">
    <property type="nucleotide sequence ID" value="NC_008027.1"/>
</dbReference>
<dbReference type="SMR" id="Q1I4G1"/>
<dbReference type="STRING" id="384676.PSEEN4819"/>
<dbReference type="GeneID" id="32807778"/>
<dbReference type="KEGG" id="pen:PSEEN4819"/>
<dbReference type="eggNOG" id="COG0320">
    <property type="taxonomic scope" value="Bacteria"/>
</dbReference>
<dbReference type="HOGENOM" id="CLU_033144_2_1_6"/>
<dbReference type="OrthoDB" id="9787898at2"/>
<dbReference type="UniPathway" id="UPA00538">
    <property type="reaction ID" value="UER00593"/>
</dbReference>
<dbReference type="Proteomes" id="UP000000658">
    <property type="component" value="Chromosome"/>
</dbReference>
<dbReference type="GO" id="GO:0005737">
    <property type="term" value="C:cytoplasm"/>
    <property type="evidence" value="ECO:0007669"/>
    <property type="project" value="UniProtKB-SubCell"/>
</dbReference>
<dbReference type="GO" id="GO:0051539">
    <property type="term" value="F:4 iron, 4 sulfur cluster binding"/>
    <property type="evidence" value="ECO:0007669"/>
    <property type="project" value="UniProtKB-UniRule"/>
</dbReference>
<dbReference type="GO" id="GO:0016992">
    <property type="term" value="F:lipoate synthase activity"/>
    <property type="evidence" value="ECO:0007669"/>
    <property type="project" value="UniProtKB-UniRule"/>
</dbReference>
<dbReference type="GO" id="GO:0046872">
    <property type="term" value="F:metal ion binding"/>
    <property type="evidence" value="ECO:0007669"/>
    <property type="project" value="UniProtKB-KW"/>
</dbReference>
<dbReference type="CDD" id="cd01335">
    <property type="entry name" value="Radical_SAM"/>
    <property type="match status" value="1"/>
</dbReference>
<dbReference type="FunFam" id="3.20.20.70:FF:000023">
    <property type="entry name" value="Lipoyl synthase"/>
    <property type="match status" value="1"/>
</dbReference>
<dbReference type="Gene3D" id="3.20.20.70">
    <property type="entry name" value="Aldolase class I"/>
    <property type="match status" value="1"/>
</dbReference>
<dbReference type="HAMAP" id="MF_00206">
    <property type="entry name" value="Lipoyl_synth"/>
    <property type="match status" value="1"/>
</dbReference>
<dbReference type="InterPro" id="IPR013785">
    <property type="entry name" value="Aldolase_TIM"/>
</dbReference>
<dbReference type="InterPro" id="IPR006638">
    <property type="entry name" value="Elp3/MiaA/NifB-like_rSAM"/>
</dbReference>
<dbReference type="InterPro" id="IPR031691">
    <property type="entry name" value="LIAS_N"/>
</dbReference>
<dbReference type="InterPro" id="IPR003698">
    <property type="entry name" value="Lipoyl_synth"/>
</dbReference>
<dbReference type="InterPro" id="IPR007197">
    <property type="entry name" value="rSAM"/>
</dbReference>
<dbReference type="NCBIfam" id="TIGR00510">
    <property type="entry name" value="lipA"/>
    <property type="match status" value="1"/>
</dbReference>
<dbReference type="NCBIfam" id="NF004019">
    <property type="entry name" value="PRK05481.1"/>
    <property type="match status" value="1"/>
</dbReference>
<dbReference type="NCBIfam" id="NF009544">
    <property type="entry name" value="PRK12928.1"/>
    <property type="match status" value="1"/>
</dbReference>
<dbReference type="PANTHER" id="PTHR10949">
    <property type="entry name" value="LIPOYL SYNTHASE"/>
    <property type="match status" value="1"/>
</dbReference>
<dbReference type="PANTHER" id="PTHR10949:SF0">
    <property type="entry name" value="LIPOYL SYNTHASE, MITOCHONDRIAL"/>
    <property type="match status" value="1"/>
</dbReference>
<dbReference type="Pfam" id="PF16881">
    <property type="entry name" value="LIAS_N"/>
    <property type="match status" value="1"/>
</dbReference>
<dbReference type="Pfam" id="PF04055">
    <property type="entry name" value="Radical_SAM"/>
    <property type="match status" value="1"/>
</dbReference>
<dbReference type="PIRSF" id="PIRSF005963">
    <property type="entry name" value="Lipoyl_synth"/>
    <property type="match status" value="1"/>
</dbReference>
<dbReference type="SFLD" id="SFLDF00271">
    <property type="entry name" value="lipoyl_synthase"/>
    <property type="match status" value="1"/>
</dbReference>
<dbReference type="SFLD" id="SFLDS00029">
    <property type="entry name" value="Radical_SAM"/>
    <property type="match status" value="1"/>
</dbReference>
<dbReference type="SMART" id="SM00729">
    <property type="entry name" value="Elp3"/>
    <property type="match status" value="1"/>
</dbReference>
<dbReference type="SUPFAM" id="SSF102114">
    <property type="entry name" value="Radical SAM enzymes"/>
    <property type="match status" value="1"/>
</dbReference>
<dbReference type="PROSITE" id="PS51918">
    <property type="entry name" value="RADICAL_SAM"/>
    <property type="match status" value="1"/>
</dbReference>
<keyword id="KW-0004">4Fe-4S</keyword>
<keyword id="KW-0963">Cytoplasm</keyword>
<keyword id="KW-0408">Iron</keyword>
<keyword id="KW-0411">Iron-sulfur</keyword>
<keyword id="KW-0479">Metal-binding</keyword>
<keyword id="KW-0949">S-adenosyl-L-methionine</keyword>
<keyword id="KW-0808">Transferase</keyword>
<reference key="1">
    <citation type="journal article" date="2006" name="Nat. Biotechnol.">
        <title>Complete genome sequence of the entomopathogenic and metabolically versatile soil bacterium Pseudomonas entomophila.</title>
        <authorList>
            <person name="Vodovar N."/>
            <person name="Vallenet D."/>
            <person name="Cruveiller S."/>
            <person name="Rouy Z."/>
            <person name="Barbe V."/>
            <person name="Acosta C."/>
            <person name="Cattolico L."/>
            <person name="Jubin C."/>
            <person name="Lajus A."/>
            <person name="Segurens B."/>
            <person name="Vacherie B."/>
            <person name="Wincker P."/>
            <person name="Weissenbach J."/>
            <person name="Lemaitre B."/>
            <person name="Medigue C."/>
            <person name="Boccard F."/>
        </authorList>
    </citation>
    <scope>NUCLEOTIDE SEQUENCE [LARGE SCALE GENOMIC DNA]</scope>
    <source>
        <strain>L48</strain>
    </source>
</reference>
<name>LIPA_PSEE4</name>
<gene>
    <name evidence="1" type="primary">lipA</name>
    <name type="ordered locus">PSEEN4819</name>
</gene>
<evidence type="ECO:0000255" key="1">
    <source>
        <dbReference type="HAMAP-Rule" id="MF_00206"/>
    </source>
</evidence>
<evidence type="ECO:0000255" key="2">
    <source>
        <dbReference type="PROSITE-ProRule" id="PRU01266"/>
    </source>
</evidence>
<evidence type="ECO:0000256" key="3">
    <source>
        <dbReference type="SAM" id="MobiDB-lite"/>
    </source>
</evidence>
<proteinExistence type="inferred from homology"/>
<accession>Q1I4G1</accession>